<dbReference type="EMBL" id="CP000964">
    <property type="protein sequence ID" value="ACI09632.1"/>
    <property type="molecule type" value="Genomic_DNA"/>
</dbReference>
<dbReference type="SMR" id="B5Y282"/>
<dbReference type="KEGG" id="kpe:KPK_4782"/>
<dbReference type="HOGENOM" id="CLU_002794_2_1_6"/>
<dbReference type="Proteomes" id="UP000001734">
    <property type="component" value="Chromosome"/>
</dbReference>
<dbReference type="GO" id="GO:0005829">
    <property type="term" value="C:cytosol"/>
    <property type="evidence" value="ECO:0007669"/>
    <property type="project" value="TreeGrafter"/>
</dbReference>
<dbReference type="GO" id="GO:0005525">
    <property type="term" value="F:GTP binding"/>
    <property type="evidence" value="ECO:0007669"/>
    <property type="project" value="UniProtKB-UniRule"/>
</dbReference>
<dbReference type="GO" id="GO:0003924">
    <property type="term" value="F:GTPase activity"/>
    <property type="evidence" value="ECO:0007669"/>
    <property type="project" value="InterPro"/>
</dbReference>
<dbReference type="GO" id="GO:0097216">
    <property type="term" value="F:guanosine tetraphosphate binding"/>
    <property type="evidence" value="ECO:0007669"/>
    <property type="project" value="UniProtKB-ARBA"/>
</dbReference>
<dbReference type="GO" id="GO:0016150">
    <property type="term" value="F:translation release factor activity, codon nonspecific"/>
    <property type="evidence" value="ECO:0007669"/>
    <property type="project" value="TreeGrafter"/>
</dbReference>
<dbReference type="GO" id="GO:0016149">
    <property type="term" value="F:translation release factor activity, codon specific"/>
    <property type="evidence" value="ECO:0007669"/>
    <property type="project" value="UniProtKB-UniRule"/>
</dbReference>
<dbReference type="GO" id="GO:0006449">
    <property type="term" value="P:regulation of translational termination"/>
    <property type="evidence" value="ECO:0007669"/>
    <property type="project" value="UniProtKB-UniRule"/>
</dbReference>
<dbReference type="CDD" id="cd04169">
    <property type="entry name" value="RF3"/>
    <property type="match status" value="1"/>
</dbReference>
<dbReference type="CDD" id="cd03689">
    <property type="entry name" value="RF3_II"/>
    <property type="match status" value="1"/>
</dbReference>
<dbReference type="CDD" id="cd16259">
    <property type="entry name" value="RF3_III"/>
    <property type="match status" value="1"/>
</dbReference>
<dbReference type="FunFam" id="2.40.30.10:FF:000040">
    <property type="entry name" value="Peptide chain release factor 3"/>
    <property type="match status" value="1"/>
</dbReference>
<dbReference type="FunFam" id="3.30.70.3280:FF:000001">
    <property type="entry name" value="Peptide chain release factor 3"/>
    <property type="match status" value="1"/>
</dbReference>
<dbReference type="FunFam" id="3.40.50.300:FF:000184">
    <property type="entry name" value="Peptide chain release factor 3"/>
    <property type="match status" value="1"/>
</dbReference>
<dbReference type="FunFam" id="3.40.50.300:FF:000253">
    <property type="entry name" value="Peptide chain release factor 3"/>
    <property type="match status" value="1"/>
</dbReference>
<dbReference type="Gene3D" id="3.40.50.300">
    <property type="entry name" value="P-loop containing nucleotide triphosphate hydrolases"/>
    <property type="match status" value="3"/>
</dbReference>
<dbReference type="Gene3D" id="3.30.70.3280">
    <property type="entry name" value="Peptide chain release factor 3, domain III"/>
    <property type="match status" value="1"/>
</dbReference>
<dbReference type="HAMAP" id="MF_00072">
    <property type="entry name" value="Rel_fac_3"/>
    <property type="match status" value="1"/>
</dbReference>
<dbReference type="InterPro" id="IPR053905">
    <property type="entry name" value="EF-G-like_DII"/>
</dbReference>
<dbReference type="InterPro" id="IPR035647">
    <property type="entry name" value="EFG_III/V"/>
</dbReference>
<dbReference type="InterPro" id="IPR031157">
    <property type="entry name" value="G_TR_CS"/>
</dbReference>
<dbReference type="InterPro" id="IPR027417">
    <property type="entry name" value="P-loop_NTPase"/>
</dbReference>
<dbReference type="InterPro" id="IPR004548">
    <property type="entry name" value="PrfC"/>
</dbReference>
<dbReference type="InterPro" id="IPR032090">
    <property type="entry name" value="RF3_C"/>
</dbReference>
<dbReference type="InterPro" id="IPR038467">
    <property type="entry name" value="RF3_dom_3_sf"/>
</dbReference>
<dbReference type="InterPro" id="IPR041732">
    <property type="entry name" value="RF3_GTP-bd"/>
</dbReference>
<dbReference type="InterPro" id="IPR005225">
    <property type="entry name" value="Small_GTP-bd"/>
</dbReference>
<dbReference type="InterPro" id="IPR000795">
    <property type="entry name" value="T_Tr_GTP-bd_dom"/>
</dbReference>
<dbReference type="InterPro" id="IPR009000">
    <property type="entry name" value="Transl_B-barrel_sf"/>
</dbReference>
<dbReference type="NCBIfam" id="TIGR00503">
    <property type="entry name" value="prfC"/>
    <property type="match status" value="1"/>
</dbReference>
<dbReference type="NCBIfam" id="NF001964">
    <property type="entry name" value="PRK00741.1"/>
    <property type="match status" value="1"/>
</dbReference>
<dbReference type="NCBIfam" id="TIGR00231">
    <property type="entry name" value="small_GTP"/>
    <property type="match status" value="1"/>
</dbReference>
<dbReference type="PANTHER" id="PTHR43556">
    <property type="entry name" value="PEPTIDE CHAIN RELEASE FACTOR RF3"/>
    <property type="match status" value="1"/>
</dbReference>
<dbReference type="PANTHER" id="PTHR43556:SF2">
    <property type="entry name" value="PEPTIDE CHAIN RELEASE FACTOR RF3"/>
    <property type="match status" value="1"/>
</dbReference>
<dbReference type="Pfam" id="PF22042">
    <property type="entry name" value="EF-G_D2"/>
    <property type="match status" value="1"/>
</dbReference>
<dbReference type="Pfam" id="PF00009">
    <property type="entry name" value="GTP_EFTU"/>
    <property type="match status" value="1"/>
</dbReference>
<dbReference type="Pfam" id="PF16658">
    <property type="entry name" value="RF3_C"/>
    <property type="match status" value="1"/>
</dbReference>
<dbReference type="PRINTS" id="PR00315">
    <property type="entry name" value="ELONGATNFCT"/>
</dbReference>
<dbReference type="SUPFAM" id="SSF54980">
    <property type="entry name" value="EF-G C-terminal domain-like"/>
    <property type="match status" value="1"/>
</dbReference>
<dbReference type="SUPFAM" id="SSF52540">
    <property type="entry name" value="P-loop containing nucleoside triphosphate hydrolases"/>
    <property type="match status" value="1"/>
</dbReference>
<dbReference type="SUPFAM" id="SSF50447">
    <property type="entry name" value="Translation proteins"/>
    <property type="match status" value="1"/>
</dbReference>
<dbReference type="PROSITE" id="PS00301">
    <property type="entry name" value="G_TR_1"/>
    <property type="match status" value="1"/>
</dbReference>
<dbReference type="PROSITE" id="PS51722">
    <property type="entry name" value="G_TR_2"/>
    <property type="match status" value="1"/>
</dbReference>
<proteinExistence type="inferred from homology"/>
<comment type="function">
    <text evidence="1">Increases the formation of ribosomal termination complexes and stimulates activities of RF-1 and RF-2. It binds guanine nucleotides and has strong preference for UGA stop codons. It may interact directly with the ribosome. The stimulation of RF-1 and RF-2 is significantly reduced by GTP and GDP, but not by GMP.</text>
</comment>
<comment type="subcellular location">
    <subcellularLocation>
        <location evidence="1">Cytoplasm</location>
    </subcellularLocation>
</comment>
<comment type="similarity">
    <text evidence="1">Belongs to the TRAFAC class translation factor GTPase superfamily. Classic translation factor GTPase family. PrfC subfamily.</text>
</comment>
<keyword id="KW-0963">Cytoplasm</keyword>
<keyword id="KW-0342">GTP-binding</keyword>
<keyword id="KW-0547">Nucleotide-binding</keyword>
<keyword id="KW-0648">Protein biosynthesis</keyword>
<evidence type="ECO:0000255" key="1">
    <source>
        <dbReference type="HAMAP-Rule" id="MF_00072"/>
    </source>
</evidence>
<feature type="chain" id="PRO_1000092486" description="Peptide chain release factor 3">
    <location>
        <begin position="1"/>
        <end position="529"/>
    </location>
</feature>
<feature type="domain" description="tr-type G">
    <location>
        <begin position="11"/>
        <end position="280"/>
    </location>
</feature>
<feature type="binding site" evidence="1">
    <location>
        <begin position="20"/>
        <end position="27"/>
    </location>
    <ligand>
        <name>GTP</name>
        <dbReference type="ChEBI" id="CHEBI:37565"/>
    </ligand>
</feature>
<feature type="binding site" evidence="1">
    <location>
        <begin position="88"/>
        <end position="92"/>
    </location>
    <ligand>
        <name>GTP</name>
        <dbReference type="ChEBI" id="CHEBI:37565"/>
    </ligand>
</feature>
<feature type="binding site" evidence="1">
    <location>
        <begin position="142"/>
        <end position="145"/>
    </location>
    <ligand>
        <name>GTP</name>
        <dbReference type="ChEBI" id="CHEBI:37565"/>
    </ligand>
</feature>
<gene>
    <name evidence="1" type="primary">prfC</name>
    <name type="ordered locus">KPK_4782</name>
</gene>
<protein>
    <recommendedName>
        <fullName evidence="1">Peptide chain release factor 3</fullName>
        <shortName evidence="1">RF-3</shortName>
    </recommendedName>
</protein>
<organism>
    <name type="scientific">Klebsiella pneumoniae (strain 342)</name>
    <dbReference type="NCBI Taxonomy" id="507522"/>
    <lineage>
        <taxon>Bacteria</taxon>
        <taxon>Pseudomonadati</taxon>
        <taxon>Pseudomonadota</taxon>
        <taxon>Gammaproteobacteria</taxon>
        <taxon>Enterobacterales</taxon>
        <taxon>Enterobacteriaceae</taxon>
        <taxon>Klebsiella/Raoultella group</taxon>
        <taxon>Klebsiella</taxon>
        <taxon>Klebsiella pneumoniae complex</taxon>
    </lineage>
</organism>
<accession>B5Y282</accession>
<reference key="1">
    <citation type="journal article" date="2008" name="PLoS Genet.">
        <title>Complete genome sequence of the N2-fixing broad host range endophyte Klebsiella pneumoniae 342 and virulence predictions verified in mice.</title>
        <authorList>
            <person name="Fouts D.E."/>
            <person name="Tyler H.L."/>
            <person name="DeBoy R.T."/>
            <person name="Daugherty S."/>
            <person name="Ren Q."/>
            <person name="Badger J.H."/>
            <person name="Durkin A.S."/>
            <person name="Huot H."/>
            <person name="Shrivastava S."/>
            <person name="Kothari S."/>
            <person name="Dodson R.J."/>
            <person name="Mohamoud Y."/>
            <person name="Khouri H."/>
            <person name="Roesch L.F.W."/>
            <person name="Krogfelt K.A."/>
            <person name="Struve C."/>
            <person name="Triplett E.W."/>
            <person name="Methe B.A."/>
        </authorList>
    </citation>
    <scope>NUCLEOTIDE SEQUENCE [LARGE SCALE GENOMIC DNA]</scope>
    <source>
        <strain>342</strain>
    </source>
</reference>
<name>RF3_KLEP3</name>
<sequence>MTLSPYLQEVAKRRTFAIISHPDAGKTTITEKVLLFGQAIQTAGTVKGRGSSQHAKSDWMEMEKQRGISITTSVMQFPYHDCLVNLLDTPGHEDFSEDTYRTLTAVDCCLMVIDAAKGVEDRTRKLMEVTRLRDTPILTFMNKLDRDIRDPMELLDEVENELKIGCAPITWPIGCGKLFKGVYHLYKDETYLYQTGKGHTIQEVRIVKGLNNPELDAAVGEDLAQQLRDELELVQGASNEFDKDLFLAGEITPVFFGTALGNFGVDHMLDGLVEWAPAPMPRNTDTREVTATEEKFTGFVFKIQANMDPKHRDRVAFMRVVSGKYEKGMKLRQVRIGKDVVISDALTFMAGDRSHVEEAYPGDIIGLHNHGTIQIGDTFTQGEMMKFTGIPNFAPELFRRIRLKDPLKQKQLLKGLVQLSEEGAVQVFRPIANNDLIVGAVGVLQFDVVVARLKSEYNVEAIYESVNVATARWVESTDVKKFEEFKRKNEVQLALDGGDNLTYIAPTMVNLNLTQERYPDVVFRKTREH</sequence>